<protein>
    <recommendedName>
        <fullName>Putative BTB/POZ domain-containing protein R773</fullName>
    </recommendedName>
</protein>
<evidence type="ECO:0000305" key="1"/>
<reference key="1">
    <citation type="journal article" date="2004" name="Science">
        <title>The 1.2-megabase genome sequence of Mimivirus.</title>
        <authorList>
            <person name="Raoult D."/>
            <person name="Audic S."/>
            <person name="Robert C."/>
            <person name="Abergel C."/>
            <person name="Renesto P."/>
            <person name="Ogata H."/>
            <person name="La Scola B."/>
            <person name="Susan M."/>
            <person name="Claverie J.-M."/>
        </authorList>
    </citation>
    <scope>NUCLEOTIDE SEQUENCE [LARGE SCALE GENOMIC DNA]</scope>
    <source>
        <strain>Rowbotham-Bradford</strain>
    </source>
</reference>
<keyword id="KW-1185">Reference proteome</keyword>
<name>YR773_MIMIV</name>
<feature type="chain" id="PRO_0000186235" description="Putative BTB/POZ domain-containing protein R773">
    <location>
        <begin position="1"/>
        <end position="489"/>
    </location>
</feature>
<feature type="domain" description="BTB">
    <location>
        <begin position="3"/>
        <end position="73"/>
    </location>
</feature>
<sequence length="489" mass="56386">MQSNIELVITDEKVQTRIIADKNILSENFPYFKAMFMYTEGQADYVCLHTQNVQVAHDLIVSCGNTSYKFQDKTWDYIFDLYKCRNFFGLDFIPLVDNTVPPEYIDKLIDTMEIIGYDYSTIKYIAHNLPKDYALNKLSIELLKSIQQILSEFYFLVENRNGLSMFDGVSKMCLKLFEFDFYSVEQMSYCYLNQTNRLVILDTNNILKIFDVQTLNVVAISSGNCFCNSIIYLESKNCIVGINSGGFEIYDAINLKLIGKINGPKQFDYVETSLIGKSSDDKYIIFQQAVETDYGYHYQLMIALVETGEIIGPIYNDKKEFSCICSPTQNIIIYGNYNNFTLWSLDSRSVIAELRLNVDPFKFVFIGFSLDGCYIIFVDSNAIAYIWSIVTKQFIRSNSTISMRNHKNPTYACNSYRQFNKEKFGLNNISILPNNNLVSTKGNCISIWNIMCQEPIESFNLPIDSFMSKIQVITNKRDLANKIRNFINS</sequence>
<proteinExistence type="inferred from homology"/>
<comment type="similarity">
    <text evidence="1">Belongs to the mimivirus BTB/WD family.</text>
</comment>
<gene>
    <name type="ordered locus">MIMI_R773</name>
</gene>
<accession>Q5UPR7</accession>
<dbReference type="EMBL" id="AY653733">
    <property type="protein sequence ID" value="AAV51033.1"/>
    <property type="molecule type" value="Genomic_DNA"/>
</dbReference>
<dbReference type="SMR" id="Q5UPR7"/>
<dbReference type="KEGG" id="vg:9925432"/>
<dbReference type="Proteomes" id="UP000001134">
    <property type="component" value="Genome"/>
</dbReference>
<dbReference type="Gene3D" id="2.130.10.10">
    <property type="entry name" value="YVTN repeat-like/Quinoprotein amine dehydrogenase"/>
    <property type="match status" value="1"/>
</dbReference>
<dbReference type="InterPro" id="IPR011047">
    <property type="entry name" value="Quinoprotein_ADH-like_sf"/>
</dbReference>
<dbReference type="InterPro" id="IPR015943">
    <property type="entry name" value="WD40/YVTN_repeat-like_dom_sf"/>
</dbReference>
<dbReference type="SUPFAM" id="SSF50998">
    <property type="entry name" value="Quinoprotein alcohol dehydrogenase-like"/>
    <property type="match status" value="1"/>
</dbReference>
<organismHost>
    <name type="scientific">Acanthamoeba polyphaga</name>
    <name type="common">Amoeba</name>
    <dbReference type="NCBI Taxonomy" id="5757"/>
</organismHost>
<organism>
    <name type="scientific">Acanthamoeba polyphaga mimivirus</name>
    <name type="common">APMV</name>
    <dbReference type="NCBI Taxonomy" id="212035"/>
    <lineage>
        <taxon>Viruses</taxon>
        <taxon>Varidnaviria</taxon>
        <taxon>Bamfordvirae</taxon>
        <taxon>Nucleocytoviricota</taxon>
        <taxon>Megaviricetes</taxon>
        <taxon>Imitervirales</taxon>
        <taxon>Mimiviridae</taxon>
        <taxon>Megamimivirinae</taxon>
        <taxon>Mimivirus</taxon>
        <taxon>Mimivirus bradfordmassiliense</taxon>
    </lineage>
</organism>